<evidence type="ECO:0000255" key="1">
    <source>
        <dbReference type="HAMAP-Rule" id="MF_01657"/>
    </source>
</evidence>
<comment type="catalytic activity">
    <reaction evidence="1">
        <text>acetaldehyde + NAD(+) + CoA = acetyl-CoA + NADH + H(+)</text>
        <dbReference type="Rhea" id="RHEA:23288"/>
        <dbReference type="ChEBI" id="CHEBI:15343"/>
        <dbReference type="ChEBI" id="CHEBI:15378"/>
        <dbReference type="ChEBI" id="CHEBI:57287"/>
        <dbReference type="ChEBI" id="CHEBI:57288"/>
        <dbReference type="ChEBI" id="CHEBI:57540"/>
        <dbReference type="ChEBI" id="CHEBI:57945"/>
        <dbReference type="EC" id="1.2.1.10"/>
    </reaction>
</comment>
<comment type="similarity">
    <text evidence="1">Belongs to the acetaldehyde dehydrogenase family.</text>
</comment>
<gene>
    <name type="ordered locus">Mpe_A3322</name>
</gene>
<accession>A2SL36</accession>
<organism>
    <name type="scientific">Methylibium petroleiphilum (strain ATCC BAA-1232 / LMG 22953 / PM1)</name>
    <dbReference type="NCBI Taxonomy" id="420662"/>
    <lineage>
        <taxon>Bacteria</taxon>
        <taxon>Pseudomonadati</taxon>
        <taxon>Pseudomonadota</taxon>
        <taxon>Betaproteobacteria</taxon>
        <taxon>Burkholderiales</taxon>
        <taxon>Sphaerotilaceae</taxon>
        <taxon>Methylibium</taxon>
    </lineage>
</organism>
<sequence length="307" mass="32722">MATKKIRCALIGSGNIGTDLIYKLKRSAVLEPVWMVGIDAASEGLQRARDLGLKTTAEGVDGLLPHVKADGIQIAFDATSAYVHPENSRKLNALGVLMVDLTPAAVGPLCVPPVNLREHAAKLEMNVNMISCAGQATIPIVYAVSRVQPVDYAEIVASLASKSIGPGTRANLDEFTYTTSDALVRVGGARRGKALAVINPAEPPMIMRNTINCLTDDEPQQARIIDSVLSMIEEVQQYVPGYKLVNGPVFDGRRVSVFMQVAGLGDYLPTYAGNLDIMTAAACRTAEMFAEEILAGTLQLTPVKEAA</sequence>
<dbReference type="EC" id="1.2.1.10" evidence="1"/>
<dbReference type="EMBL" id="CP000555">
    <property type="protein sequence ID" value="ABM96275.1"/>
    <property type="molecule type" value="Genomic_DNA"/>
</dbReference>
<dbReference type="RefSeq" id="WP_011830897.1">
    <property type="nucleotide sequence ID" value="NC_008825.1"/>
</dbReference>
<dbReference type="SMR" id="A2SL36"/>
<dbReference type="STRING" id="420662.Mpe_A3322"/>
<dbReference type="KEGG" id="mpt:Mpe_A3322"/>
<dbReference type="eggNOG" id="COG4569">
    <property type="taxonomic scope" value="Bacteria"/>
</dbReference>
<dbReference type="HOGENOM" id="CLU_062208_0_0_4"/>
<dbReference type="Proteomes" id="UP000000366">
    <property type="component" value="Chromosome"/>
</dbReference>
<dbReference type="GO" id="GO:0008774">
    <property type="term" value="F:acetaldehyde dehydrogenase (acetylating) activity"/>
    <property type="evidence" value="ECO:0007669"/>
    <property type="project" value="UniProtKB-UniRule"/>
</dbReference>
<dbReference type="GO" id="GO:0051287">
    <property type="term" value="F:NAD binding"/>
    <property type="evidence" value="ECO:0007669"/>
    <property type="project" value="UniProtKB-UniRule"/>
</dbReference>
<dbReference type="GO" id="GO:0009056">
    <property type="term" value="P:catabolic process"/>
    <property type="evidence" value="ECO:0007669"/>
    <property type="project" value="UniProtKB-KW"/>
</dbReference>
<dbReference type="CDD" id="cd23933">
    <property type="entry name" value="ALDH_C"/>
    <property type="match status" value="1"/>
</dbReference>
<dbReference type="Gene3D" id="3.30.360.10">
    <property type="entry name" value="Dihydrodipicolinate Reductase, domain 2"/>
    <property type="match status" value="1"/>
</dbReference>
<dbReference type="Gene3D" id="3.40.50.720">
    <property type="entry name" value="NAD(P)-binding Rossmann-like Domain"/>
    <property type="match status" value="1"/>
</dbReference>
<dbReference type="HAMAP" id="MF_01657">
    <property type="entry name" value="Ac_ald_DH_ac"/>
    <property type="match status" value="1"/>
</dbReference>
<dbReference type="InterPro" id="IPR003361">
    <property type="entry name" value="Acetaldehyde_dehydrogenase"/>
</dbReference>
<dbReference type="InterPro" id="IPR015426">
    <property type="entry name" value="Acetylaldehyde_DH_C"/>
</dbReference>
<dbReference type="InterPro" id="IPR036291">
    <property type="entry name" value="NAD(P)-bd_dom_sf"/>
</dbReference>
<dbReference type="InterPro" id="IPR000534">
    <property type="entry name" value="Semialdehyde_DH_NAD-bd"/>
</dbReference>
<dbReference type="NCBIfam" id="TIGR03215">
    <property type="entry name" value="ac_ald_DH_ac"/>
    <property type="match status" value="1"/>
</dbReference>
<dbReference type="NCBIfam" id="NF006157">
    <property type="entry name" value="PRK08300.1"/>
    <property type="match status" value="1"/>
</dbReference>
<dbReference type="Pfam" id="PF09290">
    <property type="entry name" value="AcetDehyd-dimer"/>
    <property type="match status" value="1"/>
</dbReference>
<dbReference type="PIRSF" id="PIRSF015689">
    <property type="entry name" value="Actaldh_dh_actl"/>
    <property type="match status" value="1"/>
</dbReference>
<dbReference type="SMART" id="SM00859">
    <property type="entry name" value="Semialdhyde_dh"/>
    <property type="match status" value="1"/>
</dbReference>
<dbReference type="SUPFAM" id="SSF55347">
    <property type="entry name" value="Glyceraldehyde-3-phosphate dehydrogenase-like, C-terminal domain"/>
    <property type="match status" value="1"/>
</dbReference>
<dbReference type="SUPFAM" id="SSF51735">
    <property type="entry name" value="NAD(P)-binding Rossmann-fold domains"/>
    <property type="match status" value="1"/>
</dbReference>
<protein>
    <recommendedName>
        <fullName evidence="1">Acetaldehyde dehydrogenase 2</fullName>
        <ecNumber evidence="1">1.2.1.10</ecNumber>
    </recommendedName>
    <alternativeName>
        <fullName evidence="1">Acetaldehyde dehydrogenase [acetylating] 2</fullName>
    </alternativeName>
</protein>
<proteinExistence type="inferred from homology"/>
<keyword id="KW-0058">Aromatic hydrocarbons catabolism</keyword>
<keyword id="KW-0520">NAD</keyword>
<keyword id="KW-0560">Oxidoreductase</keyword>
<keyword id="KW-1185">Reference proteome</keyword>
<feature type="chain" id="PRO_0000387667" description="Acetaldehyde dehydrogenase 2">
    <location>
        <begin position="1"/>
        <end position="307"/>
    </location>
</feature>
<feature type="active site" description="Acyl-thioester intermediate" evidence="1">
    <location>
        <position position="132"/>
    </location>
</feature>
<feature type="binding site" evidence="1">
    <location>
        <begin position="13"/>
        <end position="16"/>
    </location>
    <ligand>
        <name>NAD(+)</name>
        <dbReference type="ChEBI" id="CHEBI:57540"/>
    </ligand>
</feature>
<feature type="binding site" evidence="1">
    <location>
        <begin position="163"/>
        <end position="171"/>
    </location>
    <ligand>
        <name>NAD(+)</name>
        <dbReference type="ChEBI" id="CHEBI:57540"/>
    </ligand>
</feature>
<feature type="binding site" evidence="1">
    <location>
        <position position="274"/>
    </location>
    <ligand>
        <name>NAD(+)</name>
        <dbReference type="ChEBI" id="CHEBI:57540"/>
    </ligand>
</feature>
<reference key="1">
    <citation type="journal article" date="2007" name="J. Bacteriol.">
        <title>Whole-genome analysis of the methyl tert-butyl ether-degrading beta-proteobacterium Methylibium petroleiphilum PM1.</title>
        <authorList>
            <person name="Kane S.R."/>
            <person name="Chakicherla A.Y."/>
            <person name="Chain P.S.G."/>
            <person name="Schmidt R."/>
            <person name="Shin M.W."/>
            <person name="Legler T.C."/>
            <person name="Scow K.M."/>
            <person name="Larimer F.W."/>
            <person name="Lucas S.M."/>
            <person name="Richardson P.M."/>
            <person name="Hristova K.R."/>
        </authorList>
    </citation>
    <scope>NUCLEOTIDE SEQUENCE [LARGE SCALE GENOMIC DNA]</scope>
    <source>
        <strain>ATCC BAA-1232 / LMG 22953 / PM1</strain>
    </source>
</reference>
<name>ACDH2_METPP</name>